<protein>
    <recommendedName>
        <fullName evidence="1">Isoleucine--tRNA ligase</fullName>
        <ecNumber evidence="1">6.1.1.5</ecNumber>
    </recommendedName>
    <alternativeName>
        <fullName evidence="1">Isoleucyl-tRNA synthetase</fullName>
        <shortName evidence="1">IleRS</shortName>
    </alternativeName>
</protein>
<reference key="1">
    <citation type="journal article" date="2009" name="PLoS Genet.">
        <title>Organised genome dynamics in the Escherichia coli species results in highly diverse adaptive paths.</title>
        <authorList>
            <person name="Touchon M."/>
            <person name="Hoede C."/>
            <person name="Tenaillon O."/>
            <person name="Barbe V."/>
            <person name="Baeriswyl S."/>
            <person name="Bidet P."/>
            <person name="Bingen E."/>
            <person name="Bonacorsi S."/>
            <person name="Bouchier C."/>
            <person name="Bouvet O."/>
            <person name="Calteau A."/>
            <person name="Chiapello H."/>
            <person name="Clermont O."/>
            <person name="Cruveiller S."/>
            <person name="Danchin A."/>
            <person name="Diard M."/>
            <person name="Dossat C."/>
            <person name="Karoui M.E."/>
            <person name="Frapy E."/>
            <person name="Garry L."/>
            <person name="Ghigo J.M."/>
            <person name="Gilles A.M."/>
            <person name="Johnson J."/>
            <person name="Le Bouguenec C."/>
            <person name="Lescat M."/>
            <person name="Mangenot S."/>
            <person name="Martinez-Jehanne V."/>
            <person name="Matic I."/>
            <person name="Nassif X."/>
            <person name="Oztas S."/>
            <person name="Petit M.A."/>
            <person name="Pichon C."/>
            <person name="Rouy Z."/>
            <person name="Ruf C.S."/>
            <person name="Schneider D."/>
            <person name="Tourret J."/>
            <person name="Vacherie B."/>
            <person name="Vallenet D."/>
            <person name="Medigue C."/>
            <person name="Rocha E.P.C."/>
            <person name="Denamur E."/>
        </authorList>
    </citation>
    <scope>NUCLEOTIDE SEQUENCE [LARGE SCALE GENOMIC DNA]</scope>
    <source>
        <strain>55989 / EAEC</strain>
    </source>
</reference>
<name>SYI_ECO55</name>
<feature type="chain" id="PRO_1000189155" description="Isoleucine--tRNA ligase">
    <location>
        <begin position="1"/>
        <end position="938"/>
    </location>
</feature>
<feature type="short sequence motif" description="'HIGH' region">
    <location>
        <begin position="58"/>
        <end position="68"/>
    </location>
</feature>
<feature type="short sequence motif" description="'KMSKS' region">
    <location>
        <begin position="602"/>
        <end position="606"/>
    </location>
</feature>
<feature type="binding site" evidence="1">
    <location>
        <position position="561"/>
    </location>
    <ligand>
        <name>L-isoleucyl-5'-AMP</name>
        <dbReference type="ChEBI" id="CHEBI:178002"/>
    </ligand>
</feature>
<feature type="binding site" evidence="1">
    <location>
        <position position="605"/>
    </location>
    <ligand>
        <name>ATP</name>
        <dbReference type="ChEBI" id="CHEBI:30616"/>
    </ligand>
</feature>
<feature type="binding site" evidence="1">
    <location>
        <position position="901"/>
    </location>
    <ligand>
        <name>Zn(2+)</name>
        <dbReference type="ChEBI" id="CHEBI:29105"/>
    </ligand>
</feature>
<feature type="binding site" evidence="1">
    <location>
        <position position="904"/>
    </location>
    <ligand>
        <name>Zn(2+)</name>
        <dbReference type="ChEBI" id="CHEBI:29105"/>
    </ligand>
</feature>
<feature type="binding site" evidence="1">
    <location>
        <position position="921"/>
    </location>
    <ligand>
        <name>Zn(2+)</name>
        <dbReference type="ChEBI" id="CHEBI:29105"/>
    </ligand>
</feature>
<feature type="binding site" evidence="1">
    <location>
        <position position="924"/>
    </location>
    <ligand>
        <name>Zn(2+)</name>
        <dbReference type="ChEBI" id="CHEBI:29105"/>
    </ligand>
</feature>
<feature type="modified residue" description="N6-acetyllysine" evidence="1">
    <location>
        <position position="183"/>
    </location>
</feature>
<keyword id="KW-0007">Acetylation</keyword>
<keyword id="KW-0030">Aminoacyl-tRNA synthetase</keyword>
<keyword id="KW-0067">ATP-binding</keyword>
<keyword id="KW-0963">Cytoplasm</keyword>
<keyword id="KW-0436">Ligase</keyword>
<keyword id="KW-0479">Metal-binding</keyword>
<keyword id="KW-0547">Nucleotide-binding</keyword>
<keyword id="KW-0648">Protein biosynthesis</keyword>
<keyword id="KW-1185">Reference proteome</keyword>
<keyword id="KW-0862">Zinc</keyword>
<dbReference type="EC" id="6.1.1.5" evidence="1"/>
<dbReference type="EMBL" id="CU928145">
    <property type="protein sequence ID" value="CAU95912.1"/>
    <property type="molecule type" value="Genomic_DNA"/>
</dbReference>
<dbReference type="RefSeq" id="WP_001286857.1">
    <property type="nucleotide sequence ID" value="NC_011748.1"/>
</dbReference>
<dbReference type="SMR" id="B7L4E8"/>
<dbReference type="GeneID" id="93777410"/>
<dbReference type="KEGG" id="eck:EC55989_0025"/>
<dbReference type="HOGENOM" id="CLU_001493_7_1_6"/>
<dbReference type="Proteomes" id="UP000000746">
    <property type="component" value="Chromosome"/>
</dbReference>
<dbReference type="GO" id="GO:0005829">
    <property type="term" value="C:cytosol"/>
    <property type="evidence" value="ECO:0007669"/>
    <property type="project" value="TreeGrafter"/>
</dbReference>
<dbReference type="GO" id="GO:0002161">
    <property type="term" value="F:aminoacyl-tRNA deacylase activity"/>
    <property type="evidence" value="ECO:0007669"/>
    <property type="project" value="InterPro"/>
</dbReference>
<dbReference type="GO" id="GO:0005524">
    <property type="term" value="F:ATP binding"/>
    <property type="evidence" value="ECO:0007669"/>
    <property type="project" value="UniProtKB-UniRule"/>
</dbReference>
<dbReference type="GO" id="GO:0004822">
    <property type="term" value="F:isoleucine-tRNA ligase activity"/>
    <property type="evidence" value="ECO:0007669"/>
    <property type="project" value="UniProtKB-UniRule"/>
</dbReference>
<dbReference type="GO" id="GO:0000049">
    <property type="term" value="F:tRNA binding"/>
    <property type="evidence" value="ECO:0007669"/>
    <property type="project" value="InterPro"/>
</dbReference>
<dbReference type="GO" id="GO:0008270">
    <property type="term" value="F:zinc ion binding"/>
    <property type="evidence" value="ECO:0007669"/>
    <property type="project" value="UniProtKB-UniRule"/>
</dbReference>
<dbReference type="GO" id="GO:0006428">
    <property type="term" value="P:isoleucyl-tRNA aminoacylation"/>
    <property type="evidence" value="ECO:0007669"/>
    <property type="project" value="UniProtKB-UniRule"/>
</dbReference>
<dbReference type="CDD" id="cd07960">
    <property type="entry name" value="Anticodon_Ia_Ile_BEm"/>
    <property type="match status" value="1"/>
</dbReference>
<dbReference type="CDD" id="cd00818">
    <property type="entry name" value="IleRS_core"/>
    <property type="match status" value="1"/>
</dbReference>
<dbReference type="FunFam" id="1.10.730.20:FF:000001">
    <property type="entry name" value="Isoleucine--tRNA ligase"/>
    <property type="match status" value="1"/>
</dbReference>
<dbReference type="FunFam" id="3.40.50.620:FF:000042">
    <property type="entry name" value="Isoleucine--tRNA ligase"/>
    <property type="match status" value="1"/>
</dbReference>
<dbReference type="FunFam" id="3.40.50.620:FF:000048">
    <property type="entry name" value="Isoleucine--tRNA ligase"/>
    <property type="match status" value="1"/>
</dbReference>
<dbReference type="FunFam" id="3.90.740.10:FF:000002">
    <property type="entry name" value="Isoleucine--tRNA ligase"/>
    <property type="match status" value="1"/>
</dbReference>
<dbReference type="Gene3D" id="1.10.730.20">
    <property type="match status" value="1"/>
</dbReference>
<dbReference type="Gene3D" id="3.40.50.620">
    <property type="entry name" value="HUPs"/>
    <property type="match status" value="2"/>
</dbReference>
<dbReference type="Gene3D" id="3.90.740.10">
    <property type="entry name" value="Valyl/Leucyl/Isoleucyl-tRNA synthetase, editing domain"/>
    <property type="match status" value="1"/>
</dbReference>
<dbReference type="HAMAP" id="MF_02002">
    <property type="entry name" value="Ile_tRNA_synth_type1"/>
    <property type="match status" value="1"/>
</dbReference>
<dbReference type="InterPro" id="IPR001412">
    <property type="entry name" value="aa-tRNA-synth_I_CS"/>
</dbReference>
<dbReference type="InterPro" id="IPR002300">
    <property type="entry name" value="aa-tRNA-synth_Ia"/>
</dbReference>
<dbReference type="InterPro" id="IPR033708">
    <property type="entry name" value="Anticodon_Ile_BEm"/>
</dbReference>
<dbReference type="InterPro" id="IPR002301">
    <property type="entry name" value="Ile-tRNA-ligase"/>
</dbReference>
<dbReference type="InterPro" id="IPR023585">
    <property type="entry name" value="Ile-tRNA-ligase_type1"/>
</dbReference>
<dbReference type="InterPro" id="IPR050081">
    <property type="entry name" value="Ile-tRNA_ligase"/>
</dbReference>
<dbReference type="InterPro" id="IPR013155">
    <property type="entry name" value="M/V/L/I-tRNA-synth_anticd-bd"/>
</dbReference>
<dbReference type="InterPro" id="IPR014729">
    <property type="entry name" value="Rossmann-like_a/b/a_fold"/>
</dbReference>
<dbReference type="InterPro" id="IPR009080">
    <property type="entry name" value="tRNAsynth_Ia_anticodon-bd"/>
</dbReference>
<dbReference type="InterPro" id="IPR009008">
    <property type="entry name" value="Val/Leu/Ile-tRNA-synth_edit"/>
</dbReference>
<dbReference type="InterPro" id="IPR010663">
    <property type="entry name" value="Znf_FPG/IleRS"/>
</dbReference>
<dbReference type="NCBIfam" id="TIGR00392">
    <property type="entry name" value="ileS"/>
    <property type="match status" value="1"/>
</dbReference>
<dbReference type="PANTHER" id="PTHR42765:SF1">
    <property type="entry name" value="ISOLEUCINE--TRNA LIGASE, MITOCHONDRIAL"/>
    <property type="match status" value="1"/>
</dbReference>
<dbReference type="PANTHER" id="PTHR42765">
    <property type="entry name" value="SOLEUCYL-TRNA SYNTHETASE"/>
    <property type="match status" value="1"/>
</dbReference>
<dbReference type="Pfam" id="PF08264">
    <property type="entry name" value="Anticodon_1"/>
    <property type="match status" value="1"/>
</dbReference>
<dbReference type="Pfam" id="PF00133">
    <property type="entry name" value="tRNA-synt_1"/>
    <property type="match status" value="1"/>
</dbReference>
<dbReference type="Pfam" id="PF06827">
    <property type="entry name" value="zf-FPG_IleRS"/>
    <property type="match status" value="1"/>
</dbReference>
<dbReference type="PRINTS" id="PR00984">
    <property type="entry name" value="TRNASYNTHILE"/>
</dbReference>
<dbReference type="SUPFAM" id="SSF47323">
    <property type="entry name" value="Anticodon-binding domain of a subclass of class I aminoacyl-tRNA synthetases"/>
    <property type="match status" value="1"/>
</dbReference>
<dbReference type="SUPFAM" id="SSF52374">
    <property type="entry name" value="Nucleotidylyl transferase"/>
    <property type="match status" value="1"/>
</dbReference>
<dbReference type="SUPFAM" id="SSF50677">
    <property type="entry name" value="ValRS/IleRS/LeuRS editing domain"/>
    <property type="match status" value="1"/>
</dbReference>
<dbReference type="PROSITE" id="PS00178">
    <property type="entry name" value="AA_TRNA_LIGASE_I"/>
    <property type="match status" value="1"/>
</dbReference>
<organism>
    <name type="scientific">Escherichia coli (strain 55989 / EAEC)</name>
    <dbReference type="NCBI Taxonomy" id="585055"/>
    <lineage>
        <taxon>Bacteria</taxon>
        <taxon>Pseudomonadati</taxon>
        <taxon>Pseudomonadota</taxon>
        <taxon>Gammaproteobacteria</taxon>
        <taxon>Enterobacterales</taxon>
        <taxon>Enterobacteriaceae</taxon>
        <taxon>Escherichia</taxon>
    </lineage>
</organism>
<evidence type="ECO:0000255" key="1">
    <source>
        <dbReference type="HAMAP-Rule" id="MF_02002"/>
    </source>
</evidence>
<accession>B7L4E8</accession>
<proteinExistence type="inferred from homology"/>
<gene>
    <name evidence="1" type="primary">ileS</name>
    <name type="ordered locus">EC55989_0025</name>
</gene>
<comment type="function">
    <text evidence="1">Catalyzes the attachment of isoleucine to tRNA(Ile). As IleRS can inadvertently accommodate and process structurally similar amino acids such as valine, to avoid such errors it has two additional distinct tRNA(Ile)-dependent editing activities. One activity is designated as 'pretransfer' editing and involves the hydrolysis of activated Val-AMP. The other activity is designated 'posttransfer' editing and involves deacylation of mischarged Val-tRNA(Ile).</text>
</comment>
<comment type="catalytic activity">
    <reaction evidence="1">
        <text>tRNA(Ile) + L-isoleucine + ATP = L-isoleucyl-tRNA(Ile) + AMP + diphosphate</text>
        <dbReference type="Rhea" id="RHEA:11060"/>
        <dbReference type="Rhea" id="RHEA-COMP:9666"/>
        <dbReference type="Rhea" id="RHEA-COMP:9695"/>
        <dbReference type="ChEBI" id="CHEBI:30616"/>
        <dbReference type="ChEBI" id="CHEBI:33019"/>
        <dbReference type="ChEBI" id="CHEBI:58045"/>
        <dbReference type="ChEBI" id="CHEBI:78442"/>
        <dbReference type="ChEBI" id="CHEBI:78528"/>
        <dbReference type="ChEBI" id="CHEBI:456215"/>
        <dbReference type="EC" id="6.1.1.5"/>
    </reaction>
</comment>
<comment type="cofactor">
    <cofactor evidence="1">
        <name>Zn(2+)</name>
        <dbReference type="ChEBI" id="CHEBI:29105"/>
    </cofactor>
    <text evidence="1">Binds 1 zinc ion per subunit.</text>
</comment>
<comment type="subunit">
    <text evidence="1">Monomer.</text>
</comment>
<comment type="subcellular location">
    <subcellularLocation>
        <location evidence="1">Cytoplasm</location>
    </subcellularLocation>
</comment>
<comment type="domain">
    <text evidence="1">IleRS has two distinct active sites: one for aminoacylation and one for editing. The misactivated valine is translocated from the active site to the editing site, which sterically excludes the correctly activated isoleucine. The single editing site contains two valyl binding pockets, one specific for each substrate (Val-AMP or Val-tRNA(Ile)).</text>
</comment>
<comment type="similarity">
    <text evidence="1">Belongs to the class-I aminoacyl-tRNA synthetase family. IleS type 1 subfamily.</text>
</comment>
<sequence>MSDYKSTLNLPETGFPMRGDLAKREPGMLARWTDDDLYGIIRAAKKGKKTFILHDGPPYANGSIHIGHSVNKILKDIIVKSKGLSGYDSPYVPGWDCHGLPIELKVEQEYGKPGEKFTAAEFRAKCREYAATQVDGQRKDFIRLGVLGDWSHPYLTMDFKTEANIIRALGKIIGNGHLHKGAKPVHWCVDCRSALAEAEVEYYDKTSPSIDVAFQAVDQDALKAKFAVSNVNGPISLVIWTTTPWTLPANRAISIAPDFDYALVQIDGQAVILAKDLVESVMQRIGVTDYTILGTVKGAELELLRFTHPFMGFDVPAILGDHVTLDAGTGAVHTAPGHGPDDYVIGQKYGLETANPVGPDGTYLPGTYPTLDGVNVFKANDIVVALLQEKGALLHVEKMQHSYPCCWRHKTPIIFRATPQWFVSMDQKGLRAQSLKEIKGVQWIPDWGQARIESMVANRPDWCISRQRTWGVPMSLFVHKDTEELHPRTLELMEEVAKRVEVDGIQAWWDLDAKEILGDEADQYVKVPDTLDVWFDSGSTHSSVVDVRPEFAGHAADMYLEGSDQHRGWFMSSLMISTAMKGKAPYRQVLTHGFTVDGQGRKMSKSIGNTVSPQDVMNKLGADILRLWVASTDYTGEMAVSDEILKRAADSYRRIRNTARFLLANLNGFDPAKDMVKPEEMVVLDRWAVGCAKAAQEDILKAYEAYDFHEVVQRLMRFCSVEMGSFYLDIIKDRQYTAKADSVARRSCQTALYHIAEALVRWMAPILSFTADEVWGYLPGEREKYVFTGEWYEGLFGLADSEAMNDAFWDELLKVRGEVNKVIEQARADKKVGGSLEAAVTLYAEPELSAKLTALGDELRFVLLTSGATVADYNDAPADAQQSEVLKGLKVALSKAEGEKCPRCWHYTQDVGKVAEHAEICGRCVSNVAGDGEKRKFA</sequence>